<reference key="1">
    <citation type="submission" date="2007-03" db="EMBL/GenBank/DDBJ databases">
        <title>Complete sequence of Desulfotomaculum reducens MI-1.</title>
        <authorList>
            <consortium name="US DOE Joint Genome Institute"/>
            <person name="Copeland A."/>
            <person name="Lucas S."/>
            <person name="Lapidus A."/>
            <person name="Barry K."/>
            <person name="Detter J.C."/>
            <person name="Glavina del Rio T."/>
            <person name="Hammon N."/>
            <person name="Israni S."/>
            <person name="Dalin E."/>
            <person name="Tice H."/>
            <person name="Pitluck S."/>
            <person name="Sims D."/>
            <person name="Brettin T."/>
            <person name="Bruce D."/>
            <person name="Han C."/>
            <person name="Tapia R."/>
            <person name="Schmutz J."/>
            <person name="Larimer F."/>
            <person name="Land M."/>
            <person name="Hauser L."/>
            <person name="Kyrpides N."/>
            <person name="Kim E."/>
            <person name="Tebo B.M."/>
            <person name="Richardson P."/>
        </authorList>
    </citation>
    <scope>NUCLEOTIDE SEQUENCE [LARGE SCALE GENOMIC DNA]</scope>
    <source>
        <strain>ATCC BAA-1160 / DSM 100696 / MI-1</strain>
    </source>
</reference>
<name>DNLJ_DESRM</name>
<sequence>MADLSQQSKARVEALRREINHHNYQYYVLDQPTITDAQYDQLMQELLRLEERHPELVTPDSPTQRVGGQVQRGFSSVPHKIPMLSLGNAFGEGDLREFDRRVRSYLPGEEVKYVVELKIDGLAISLWYEKGLLVRGATRGDGELGEDITINLKTIRAIPLRLTQEVPFLEVRGEAYMPKDSFVRLNEAREEAGEPLFANPRNAAAGSLRQLDPKITAARNLSVFMYAIGYIEGAKPPSHAESLAWLKELGIRINPDHQVCGSIDEVIDFISQWQAKRYQLPYAIDGMVIKVNSLEQQQRLGTTMKSPRWAIAYKFPAEQAVSTIKDIIIRVGRTGVLTPTAILEPVQLAGTTVSKATLHNEDIIRQKDIRIGDKALVQKAGDIIPEIVQVYPEKRTGNEVPFILPVTCPECGAEVVRVAGEAAHRCTNENCSAKSREGIIHFVSRSAMDIMGLGEGIVNQLIKGGLVKDPADLYDLKYEDLIRQERMGARSSQKLLAAIEASKNNSLGQLLFGLGIRHVGERAAKILARQFGSMQALMQATAEDLTGISEIGPRIAESIMEYFSRQENQGLIERLSKAGVNMLEEVEQTESTDQTLSGKTFVVTGTLEGFSRQEAQRAIEERGGKVSGSVSKKTNYVVVGENPGSKHDKARQLGITILTEQDFVKLLQQQ</sequence>
<dbReference type="EC" id="6.5.1.2" evidence="1"/>
<dbReference type="EMBL" id="CP000612">
    <property type="protein sequence ID" value="ABO50856.1"/>
    <property type="molecule type" value="Genomic_DNA"/>
</dbReference>
<dbReference type="RefSeq" id="WP_011878654.1">
    <property type="nucleotide sequence ID" value="NC_009253.1"/>
</dbReference>
<dbReference type="SMR" id="A4J703"/>
<dbReference type="STRING" id="349161.Dred_2346"/>
<dbReference type="KEGG" id="drm:Dred_2346"/>
<dbReference type="eggNOG" id="COG0272">
    <property type="taxonomic scope" value="Bacteria"/>
</dbReference>
<dbReference type="HOGENOM" id="CLU_007764_2_1_9"/>
<dbReference type="OrthoDB" id="9759736at2"/>
<dbReference type="Proteomes" id="UP000001556">
    <property type="component" value="Chromosome"/>
</dbReference>
<dbReference type="GO" id="GO:0005829">
    <property type="term" value="C:cytosol"/>
    <property type="evidence" value="ECO:0007669"/>
    <property type="project" value="TreeGrafter"/>
</dbReference>
<dbReference type="GO" id="GO:0003677">
    <property type="term" value="F:DNA binding"/>
    <property type="evidence" value="ECO:0007669"/>
    <property type="project" value="InterPro"/>
</dbReference>
<dbReference type="GO" id="GO:0003911">
    <property type="term" value="F:DNA ligase (NAD+) activity"/>
    <property type="evidence" value="ECO:0007669"/>
    <property type="project" value="UniProtKB-UniRule"/>
</dbReference>
<dbReference type="GO" id="GO:0046872">
    <property type="term" value="F:metal ion binding"/>
    <property type="evidence" value="ECO:0007669"/>
    <property type="project" value="UniProtKB-KW"/>
</dbReference>
<dbReference type="GO" id="GO:0006281">
    <property type="term" value="P:DNA repair"/>
    <property type="evidence" value="ECO:0007669"/>
    <property type="project" value="UniProtKB-KW"/>
</dbReference>
<dbReference type="GO" id="GO:0006260">
    <property type="term" value="P:DNA replication"/>
    <property type="evidence" value="ECO:0007669"/>
    <property type="project" value="UniProtKB-KW"/>
</dbReference>
<dbReference type="CDD" id="cd17748">
    <property type="entry name" value="BRCT_DNA_ligase_like"/>
    <property type="match status" value="1"/>
</dbReference>
<dbReference type="CDD" id="cd00114">
    <property type="entry name" value="LIGANc"/>
    <property type="match status" value="1"/>
</dbReference>
<dbReference type="FunFam" id="1.10.150.20:FF:000006">
    <property type="entry name" value="DNA ligase"/>
    <property type="match status" value="1"/>
</dbReference>
<dbReference type="FunFam" id="1.10.150.20:FF:000007">
    <property type="entry name" value="DNA ligase"/>
    <property type="match status" value="1"/>
</dbReference>
<dbReference type="FunFam" id="1.10.287.610:FF:000002">
    <property type="entry name" value="DNA ligase"/>
    <property type="match status" value="1"/>
</dbReference>
<dbReference type="FunFam" id="2.40.50.140:FF:000012">
    <property type="entry name" value="DNA ligase"/>
    <property type="match status" value="1"/>
</dbReference>
<dbReference type="FunFam" id="3.30.470.30:FF:000001">
    <property type="entry name" value="DNA ligase"/>
    <property type="match status" value="1"/>
</dbReference>
<dbReference type="FunFam" id="3.40.50.10190:FF:000054">
    <property type="entry name" value="DNA ligase"/>
    <property type="match status" value="1"/>
</dbReference>
<dbReference type="Gene3D" id="6.20.10.30">
    <property type="match status" value="1"/>
</dbReference>
<dbReference type="Gene3D" id="1.10.150.20">
    <property type="entry name" value="5' to 3' exonuclease, C-terminal subdomain"/>
    <property type="match status" value="2"/>
</dbReference>
<dbReference type="Gene3D" id="3.40.50.10190">
    <property type="entry name" value="BRCT domain"/>
    <property type="match status" value="1"/>
</dbReference>
<dbReference type="Gene3D" id="3.30.470.30">
    <property type="entry name" value="DNA ligase/mRNA capping enzyme"/>
    <property type="match status" value="1"/>
</dbReference>
<dbReference type="Gene3D" id="1.10.287.610">
    <property type="entry name" value="Helix hairpin bin"/>
    <property type="match status" value="1"/>
</dbReference>
<dbReference type="Gene3D" id="2.40.50.140">
    <property type="entry name" value="Nucleic acid-binding proteins"/>
    <property type="match status" value="1"/>
</dbReference>
<dbReference type="HAMAP" id="MF_01588">
    <property type="entry name" value="DNA_ligase_A"/>
    <property type="match status" value="1"/>
</dbReference>
<dbReference type="InterPro" id="IPR001357">
    <property type="entry name" value="BRCT_dom"/>
</dbReference>
<dbReference type="InterPro" id="IPR036420">
    <property type="entry name" value="BRCT_dom_sf"/>
</dbReference>
<dbReference type="InterPro" id="IPR041663">
    <property type="entry name" value="DisA/LigA_HHH"/>
</dbReference>
<dbReference type="InterPro" id="IPR001679">
    <property type="entry name" value="DNA_ligase"/>
</dbReference>
<dbReference type="InterPro" id="IPR018239">
    <property type="entry name" value="DNA_ligase_AS"/>
</dbReference>
<dbReference type="InterPro" id="IPR033136">
    <property type="entry name" value="DNA_ligase_CS"/>
</dbReference>
<dbReference type="InterPro" id="IPR013839">
    <property type="entry name" value="DNAligase_adenylation"/>
</dbReference>
<dbReference type="InterPro" id="IPR013840">
    <property type="entry name" value="DNAligase_N"/>
</dbReference>
<dbReference type="InterPro" id="IPR003583">
    <property type="entry name" value="Hlx-hairpin-Hlx_DNA-bd_motif"/>
</dbReference>
<dbReference type="InterPro" id="IPR012340">
    <property type="entry name" value="NA-bd_OB-fold"/>
</dbReference>
<dbReference type="InterPro" id="IPR004150">
    <property type="entry name" value="NAD_DNA_ligase_OB"/>
</dbReference>
<dbReference type="InterPro" id="IPR010994">
    <property type="entry name" value="RuvA_2-like"/>
</dbReference>
<dbReference type="InterPro" id="IPR004149">
    <property type="entry name" value="Znf_DNAligase_C4"/>
</dbReference>
<dbReference type="NCBIfam" id="TIGR00575">
    <property type="entry name" value="dnlj"/>
    <property type="match status" value="1"/>
</dbReference>
<dbReference type="NCBIfam" id="NF005932">
    <property type="entry name" value="PRK07956.1"/>
    <property type="match status" value="1"/>
</dbReference>
<dbReference type="PANTHER" id="PTHR23389">
    <property type="entry name" value="CHROMOSOME TRANSMISSION FIDELITY FACTOR 18"/>
    <property type="match status" value="1"/>
</dbReference>
<dbReference type="PANTHER" id="PTHR23389:SF9">
    <property type="entry name" value="DNA LIGASE"/>
    <property type="match status" value="1"/>
</dbReference>
<dbReference type="Pfam" id="PF00533">
    <property type="entry name" value="BRCT"/>
    <property type="match status" value="1"/>
</dbReference>
<dbReference type="Pfam" id="PF01653">
    <property type="entry name" value="DNA_ligase_aden"/>
    <property type="match status" value="1"/>
</dbReference>
<dbReference type="Pfam" id="PF03120">
    <property type="entry name" value="DNA_ligase_OB"/>
    <property type="match status" value="1"/>
</dbReference>
<dbReference type="Pfam" id="PF03119">
    <property type="entry name" value="DNA_ligase_ZBD"/>
    <property type="match status" value="1"/>
</dbReference>
<dbReference type="Pfam" id="PF12826">
    <property type="entry name" value="HHH_2"/>
    <property type="match status" value="1"/>
</dbReference>
<dbReference type="Pfam" id="PF22745">
    <property type="entry name" value="Nlig-Ia"/>
    <property type="match status" value="1"/>
</dbReference>
<dbReference type="PIRSF" id="PIRSF001604">
    <property type="entry name" value="LigA"/>
    <property type="match status" value="1"/>
</dbReference>
<dbReference type="SMART" id="SM00292">
    <property type="entry name" value="BRCT"/>
    <property type="match status" value="1"/>
</dbReference>
<dbReference type="SMART" id="SM00278">
    <property type="entry name" value="HhH1"/>
    <property type="match status" value="3"/>
</dbReference>
<dbReference type="SMART" id="SM00532">
    <property type="entry name" value="LIGANc"/>
    <property type="match status" value="1"/>
</dbReference>
<dbReference type="SUPFAM" id="SSF52113">
    <property type="entry name" value="BRCT domain"/>
    <property type="match status" value="1"/>
</dbReference>
<dbReference type="SUPFAM" id="SSF56091">
    <property type="entry name" value="DNA ligase/mRNA capping enzyme, catalytic domain"/>
    <property type="match status" value="1"/>
</dbReference>
<dbReference type="SUPFAM" id="SSF50249">
    <property type="entry name" value="Nucleic acid-binding proteins"/>
    <property type="match status" value="1"/>
</dbReference>
<dbReference type="SUPFAM" id="SSF47781">
    <property type="entry name" value="RuvA domain 2-like"/>
    <property type="match status" value="1"/>
</dbReference>
<dbReference type="PROSITE" id="PS50172">
    <property type="entry name" value="BRCT"/>
    <property type="match status" value="1"/>
</dbReference>
<dbReference type="PROSITE" id="PS01055">
    <property type="entry name" value="DNA_LIGASE_N1"/>
    <property type="match status" value="1"/>
</dbReference>
<dbReference type="PROSITE" id="PS01056">
    <property type="entry name" value="DNA_LIGASE_N2"/>
    <property type="match status" value="1"/>
</dbReference>
<accession>A4J703</accession>
<organism>
    <name type="scientific">Desulforamulus reducens (strain ATCC BAA-1160 / DSM 100696 / MI-1)</name>
    <name type="common">Desulfotomaculum reducens</name>
    <dbReference type="NCBI Taxonomy" id="349161"/>
    <lineage>
        <taxon>Bacteria</taxon>
        <taxon>Bacillati</taxon>
        <taxon>Bacillota</taxon>
        <taxon>Clostridia</taxon>
        <taxon>Eubacteriales</taxon>
        <taxon>Peptococcaceae</taxon>
        <taxon>Desulforamulus</taxon>
    </lineage>
</organism>
<feature type="chain" id="PRO_0000340345" description="DNA ligase">
    <location>
        <begin position="1"/>
        <end position="670"/>
    </location>
</feature>
<feature type="domain" description="BRCT" evidence="1">
    <location>
        <begin position="591"/>
        <end position="670"/>
    </location>
</feature>
<feature type="active site" description="N6-AMP-lysine intermediate" evidence="1">
    <location>
        <position position="118"/>
    </location>
</feature>
<feature type="binding site" evidence="1">
    <location>
        <begin position="36"/>
        <end position="40"/>
    </location>
    <ligand>
        <name>NAD(+)</name>
        <dbReference type="ChEBI" id="CHEBI:57540"/>
    </ligand>
</feature>
<feature type="binding site" evidence="1">
    <location>
        <begin position="85"/>
        <end position="86"/>
    </location>
    <ligand>
        <name>NAD(+)</name>
        <dbReference type="ChEBI" id="CHEBI:57540"/>
    </ligand>
</feature>
<feature type="binding site" evidence="1">
    <location>
        <position position="116"/>
    </location>
    <ligand>
        <name>NAD(+)</name>
        <dbReference type="ChEBI" id="CHEBI:57540"/>
    </ligand>
</feature>
<feature type="binding site" evidence="1">
    <location>
        <position position="139"/>
    </location>
    <ligand>
        <name>NAD(+)</name>
        <dbReference type="ChEBI" id="CHEBI:57540"/>
    </ligand>
</feature>
<feature type="binding site" evidence="1">
    <location>
        <position position="174"/>
    </location>
    <ligand>
        <name>NAD(+)</name>
        <dbReference type="ChEBI" id="CHEBI:57540"/>
    </ligand>
</feature>
<feature type="binding site" evidence="1">
    <location>
        <position position="290"/>
    </location>
    <ligand>
        <name>NAD(+)</name>
        <dbReference type="ChEBI" id="CHEBI:57540"/>
    </ligand>
</feature>
<feature type="binding site" evidence="1">
    <location>
        <position position="314"/>
    </location>
    <ligand>
        <name>NAD(+)</name>
        <dbReference type="ChEBI" id="CHEBI:57540"/>
    </ligand>
</feature>
<feature type="binding site" evidence="1">
    <location>
        <position position="408"/>
    </location>
    <ligand>
        <name>Zn(2+)</name>
        <dbReference type="ChEBI" id="CHEBI:29105"/>
    </ligand>
</feature>
<feature type="binding site" evidence="1">
    <location>
        <position position="411"/>
    </location>
    <ligand>
        <name>Zn(2+)</name>
        <dbReference type="ChEBI" id="CHEBI:29105"/>
    </ligand>
</feature>
<feature type="binding site" evidence="1">
    <location>
        <position position="426"/>
    </location>
    <ligand>
        <name>Zn(2+)</name>
        <dbReference type="ChEBI" id="CHEBI:29105"/>
    </ligand>
</feature>
<feature type="binding site" evidence="1">
    <location>
        <position position="431"/>
    </location>
    <ligand>
        <name>Zn(2+)</name>
        <dbReference type="ChEBI" id="CHEBI:29105"/>
    </ligand>
</feature>
<keyword id="KW-0227">DNA damage</keyword>
<keyword id="KW-0234">DNA repair</keyword>
<keyword id="KW-0235">DNA replication</keyword>
<keyword id="KW-0436">Ligase</keyword>
<keyword id="KW-0460">Magnesium</keyword>
<keyword id="KW-0464">Manganese</keyword>
<keyword id="KW-0479">Metal-binding</keyword>
<keyword id="KW-0520">NAD</keyword>
<keyword id="KW-1185">Reference proteome</keyword>
<keyword id="KW-0862">Zinc</keyword>
<gene>
    <name evidence="1" type="primary">ligA</name>
    <name type="ordered locus">Dred_2346</name>
</gene>
<evidence type="ECO:0000255" key="1">
    <source>
        <dbReference type="HAMAP-Rule" id="MF_01588"/>
    </source>
</evidence>
<proteinExistence type="inferred from homology"/>
<comment type="function">
    <text evidence="1">DNA ligase that catalyzes the formation of phosphodiester linkages between 5'-phosphoryl and 3'-hydroxyl groups in double-stranded DNA using NAD as a coenzyme and as the energy source for the reaction. It is essential for DNA replication and repair of damaged DNA.</text>
</comment>
<comment type="catalytic activity">
    <reaction evidence="1">
        <text>NAD(+) + (deoxyribonucleotide)n-3'-hydroxyl + 5'-phospho-(deoxyribonucleotide)m = (deoxyribonucleotide)n+m + AMP + beta-nicotinamide D-nucleotide.</text>
        <dbReference type="EC" id="6.5.1.2"/>
    </reaction>
</comment>
<comment type="cofactor">
    <cofactor evidence="1">
        <name>Mg(2+)</name>
        <dbReference type="ChEBI" id="CHEBI:18420"/>
    </cofactor>
    <cofactor evidence="1">
        <name>Mn(2+)</name>
        <dbReference type="ChEBI" id="CHEBI:29035"/>
    </cofactor>
</comment>
<comment type="similarity">
    <text evidence="1">Belongs to the NAD-dependent DNA ligase family. LigA subfamily.</text>
</comment>
<protein>
    <recommendedName>
        <fullName evidence="1">DNA ligase</fullName>
        <ecNumber evidence="1">6.5.1.2</ecNumber>
    </recommendedName>
    <alternativeName>
        <fullName evidence="1">Polydeoxyribonucleotide synthase [NAD(+)]</fullName>
    </alternativeName>
</protein>